<feature type="chain" id="PRO_0000317122" description="D-aspartate oxidase 2" evidence="5">
    <location>
        <begin position="1"/>
        <end position="331"/>
    </location>
</feature>
<feature type="binding site" evidence="3">
    <location>
        <position position="35"/>
    </location>
    <ligand>
        <name>FAD</name>
        <dbReference type="ChEBI" id="CHEBI:57692"/>
    </ligand>
</feature>
<feature type="binding site" evidence="3">
    <location>
        <position position="36"/>
    </location>
    <ligand>
        <name>FAD</name>
        <dbReference type="ChEBI" id="CHEBI:57692"/>
    </ligand>
</feature>
<feature type="binding site" evidence="3">
    <location>
        <position position="43"/>
    </location>
    <ligand>
        <name>FAD</name>
        <dbReference type="ChEBI" id="CHEBI:57692"/>
    </ligand>
</feature>
<feature type="binding site" evidence="3">
    <location>
        <position position="307"/>
    </location>
    <ligand>
        <name>FAD</name>
        <dbReference type="ChEBI" id="CHEBI:57692"/>
    </ligand>
</feature>
<evidence type="ECO:0000250" key="1">
    <source>
        <dbReference type="UniProtKB" id="P14920"/>
    </source>
</evidence>
<evidence type="ECO:0000250" key="2">
    <source>
        <dbReference type="UniProtKB" id="Q19564"/>
    </source>
</evidence>
<evidence type="ECO:0000250" key="3">
    <source>
        <dbReference type="UniProtKB" id="Q99489"/>
    </source>
</evidence>
<evidence type="ECO:0000255" key="4"/>
<evidence type="ECO:0000305" key="5"/>
<evidence type="ECO:0000312" key="6">
    <source>
        <dbReference type="EMBL" id="CAP25156.1"/>
    </source>
</evidence>
<evidence type="ECO:0000312" key="7">
    <source>
        <dbReference type="WormBase" id="CBG04460"/>
    </source>
</evidence>
<gene>
    <name evidence="7" type="primary">ddo-2</name>
    <name evidence="7" type="ORF">CBG04460</name>
</gene>
<sequence>MLPKIAVIGEGVIGCTSALQIAKAIPNSKITIFHDKPFENSCSAGPAGLFRIDYEENTEYGRASFAWFSHLYRTTKGAETGVKLVSGHIQSDNLESLKQQQRAYGDIVYNFRFLDDRERLDIFPSPSKHCIHYTAYASEGNKYVPYLKRLLLEQKVEFQQKNVENLDTIADAGYDVIVNCAGLYGGKLAGDDDQCYPIRGVILEVDAPWHKHFNYRDFTTFTIPKENSVVIGSTKQDNRWDLEITDEDRNDILSRYIELHPGMREPKILKEWSALRPGRKHVRIESQQRKTTETGKEYTVVHHYGHGSNGFTLGWGTAIEATKLVKKALGL</sequence>
<comment type="function">
    <text evidence="2">Selectively catalyzes the oxidative deamination of acidic amino acids (By similarity). May play a role in the egg-laying events and early development of the worm, in addition to quality control of the germ cells (By similarity).</text>
</comment>
<comment type="catalytic activity">
    <reaction evidence="2">
        <text>D-aspartate + O2 + H2O = oxaloacetate + H2O2 + NH4(+)</text>
        <dbReference type="Rhea" id="RHEA:12512"/>
        <dbReference type="ChEBI" id="CHEBI:15377"/>
        <dbReference type="ChEBI" id="CHEBI:15379"/>
        <dbReference type="ChEBI" id="CHEBI:16240"/>
        <dbReference type="ChEBI" id="CHEBI:16452"/>
        <dbReference type="ChEBI" id="CHEBI:28938"/>
        <dbReference type="ChEBI" id="CHEBI:29990"/>
        <dbReference type="EC" id="1.4.3.1"/>
    </reaction>
    <physiologicalReaction direction="left-to-right" evidence="2">
        <dbReference type="Rhea" id="RHEA:12513"/>
    </physiologicalReaction>
</comment>
<comment type="catalytic activity">
    <reaction evidence="2">
        <text>D-glutamate + O2 + H2O = H2O2 + 2-oxoglutarate + NH4(+)</text>
        <dbReference type="Rhea" id="RHEA:10028"/>
        <dbReference type="ChEBI" id="CHEBI:15377"/>
        <dbReference type="ChEBI" id="CHEBI:15379"/>
        <dbReference type="ChEBI" id="CHEBI:16240"/>
        <dbReference type="ChEBI" id="CHEBI:16810"/>
        <dbReference type="ChEBI" id="CHEBI:28938"/>
        <dbReference type="ChEBI" id="CHEBI:29986"/>
    </reaction>
    <physiologicalReaction direction="left-to-right" evidence="2">
        <dbReference type="Rhea" id="RHEA:10029"/>
    </physiologicalReaction>
</comment>
<comment type="cofactor">
    <cofactor evidence="1">
        <name>FAD</name>
        <dbReference type="ChEBI" id="CHEBI:57692"/>
    </cofactor>
</comment>
<comment type="subcellular location">
    <subcellularLocation>
        <location evidence="2">Cytoplasm</location>
    </subcellularLocation>
</comment>
<comment type="similarity">
    <text evidence="4">Belongs to the DAMOX/DASOX family.</text>
</comment>
<comment type="caution">
    <text evidence="5">The conserved active site Tyr residue in position 221 is replaced by a Phe.</text>
</comment>
<protein>
    <recommendedName>
        <fullName evidence="2">D-aspartate oxidase 2</fullName>
        <shortName evidence="2">DASOX 2</shortName>
        <shortName evidence="5">DASPO 2</shortName>
        <shortName evidence="2">DDO-2</shortName>
        <ecNumber evidence="2">1.4.3.1</ecNumber>
    </recommendedName>
</protein>
<dbReference type="EC" id="1.4.3.1" evidence="2"/>
<dbReference type="EMBL" id="HE601251">
    <property type="protein sequence ID" value="CAP25156.1"/>
    <property type="molecule type" value="Genomic_DNA"/>
</dbReference>
<dbReference type="SMR" id="A8WXM1"/>
<dbReference type="FunCoup" id="A8WXM1">
    <property type="interactions" value="1"/>
</dbReference>
<dbReference type="STRING" id="6238.A8WXM1"/>
<dbReference type="EnsemblMetazoa" id="CBG04460.1">
    <property type="protein sequence ID" value="CBG04460.1"/>
    <property type="gene ID" value="WBGene00027125"/>
</dbReference>
<dbReference type="KEGG" id="cbr:CBG_04460"/>
<dbReference type="CTD" id="8576441"/>
<dbReference type="WormBase" id="CBG04460">
    <property type="protein sequence ID" value="CBP06757"/>
    <property type="gene ID" value="WBGene00027125"/>
    <property type="gene designation" value="Cbr-ddo-2"/>
</dbReference>
<dbReference type="eggNOG" id="KOG3923">
    <property type="taxonomic scope" value="Eukaryota"/>
</dbReference>
<dbReference type="HOGENOM" id="CLU_034311_0_2_1"/>
<dbReference type="InParanoid" id="A8WXM1"/>
<dbReference type="OMA" id="PGMREPK"/>
<dbReference type="Proteomes" id="UP000008549">
    <property type="component" value="Unassembled WGS sequence"/>
</dbReference>
<dbReference type="GO" id="GO:0005737">
    <property type="term" value="C:cytoplasm"/>
    <property type="evidence" value="ECO:0000318"/>
    <property type="project" value="GO_Central"/>
</dbReference>
<dbReference type="GO" id="GO:0005782">
    <property type="term" value="C:peroxisomal matrix"/>
    <property type="evidence" value="ECO:0000250"/>
    <property type="project" value="UniProtKB"/>
</dbReference>
<dbReference type="GO" id="GO:0003884">
    <property type="term" value="F:D-amino-acid oxidase activity"/>
    <property type="evidence" value="ECO:0000318"/>
    <property type="project" value="GO_Central"/>
</dbReference>
<dbReference type="GO" id="GO:0008445">
    <property type="term" value="F:D-aspartate oxidase activity"/>
    <property type="evidence" value="ECO:0000250"/>
    <property type="project" value="UniProtKB"/>
</dbReference>
<dbReference type="GO" id="GO:0047821">
    <property type="term" value="F:D-glutamate oxidase activity"/>
    <property type="evidence" value="ECO:0000250"/>
    <property type="project" value="UniProtKB"/>
</dbReference>
<dbReference type="GO" id="GO:0071949">
    <property type="term" value="F:FAD binding"/>
    <property type="evidence" value="ECO:0000250"/>
    <property type="project" value="UniProtKB"/>
</dbReference>
<dbReference type="GO" id="GO:0006533">
    <property type="term" value="P:aspartate catabolic process"/>
    <property type="evidence" value="ECO:0000250"/>
    <property type="project" value="UniProtKB"/>
</dbReference>
<dbReference type="GO" id="GO:0019478">
    <property type="term" value="P:D-amino acid catabolic process"/>
    <property type="evidence" value="ECO:0000250"/>
    <property type="project" value="UniProtKB"/>
</dbReference>
<dbReference type="Gene3D" id="3.30.9.10">
    <property type="entry name" value="D-Amino Acid Oxidase, subunit A, domain 2"/>
    <property type="match status" value="1"/>
</dbReference>
<dbReference type="Gene3D" id="3.40.50.720">
    <property type="entry name" value="NAD(P)-binding Rossmann-like Domain"/>
    <property type="match status" value="1"/>
</dbReference>
<dbReference type="InterPro" id="IPR006181">
    <property type="entry name" value="D-amino_acid_oxidase_CS"/>
</dbReference>
<dbReference type="InterPro" id="IPR023209">
    <property type="entry name" value="DAO"/>
</dbReference>
<dbReference type="InterPro" id="IPR006076">
    <property type="entry name" value="FAD-dep_OxRdtase"/>
</dbReference>
<dbReference type="PANTHER" id="PTHR11530">
    <property type="entry name" value="D-AMINO ACID OXIDASE"/>
    <property type="match status" value="1"/>
</dbReference>
<dbReference type="PANTHER" id="PTHR11530:SF13">
    <property type="entry name" value="D-ASPARTATE OXIDASE 2"/>
    <property type="match status" value="1"/>
</dbReference>
<dbReference type="Pfam" id="PF01266">
    <property type="entry name" value="DAO"/>
    <property type="match status" value="1"/>
</dbReference>
<dbReference type="PIRSF" id="PIRSF000189">
    <property type="entry name" value="D-aa_oxidase"/>
    <property type="match status" value="1"/>
</dbReference>
<dbReference type="SUPFAM" id="SSF54373">
    <property type="entry name" value="FAD-linked reductases, C-terminal domain"/>
    <property type="match status" value="1"/>
</dbReference>
<dbReference type="SUPFAM" id="SSF51971">
    <property type="entry name" value="Nucleotide-binding domain"/>
    <property type="match status" value="1"/>
</dbReference>
<dbReference type="PROSITE" id="PS00677">
    <property type="entry name" value="DAO"/>
    <property type="match status" value="1"/>
</dbReference>
<accession>A8WXM1</accession>
<keyword id="KW-0963">Cytoplasm</keyword>
<keyword id="KW-0274">FAD</keyword>
<keyword id="KW-0285">Flavoprotein</keyword>
<keyword id="KW-0560">Oxidoreductase</keyword>
<keyword id="KW-1185">Reference proteome</keyword>
<organism>
    <name type="scientific">Caenorhabditis briggsae</name>
    <dbReference type="NCBI Taxonomy" id="6238"/>
    <lineage>
        <taxon>Eukaryota</taxon>
        <taxon>Metazoa</taxon>
        <taxon>Ecdysozoa</taxon>
        <taxon>Nematoda</taxon>
        <taxon>Chromadorea</taxon>
        <taxon>Rhabditida</taxon>
        <taxon>Rhabditina</taxon>
        <taxon>Rhabditomorpha</taxon>
        <taxon>Rhabditoidea</taxon>
        <taxon>Rhabditidae</taxon>
        <taxon>Peloderinae</taxon>
        <taxon>Caenorhabditis</taxon>
    </lineage>
</organism>
<reference evidence="5 6" key="1">
    <citation type="journal article" date="2003" name="PLoS Biol.">
        <title>The genome sequence of Caenorhabditis briggsae: a platform for comparative genomics.</title>
        <authorList>
            <person name="Stein L.D."/>
            <person name="Bao Z."/>
            <person name="Blasiar D."/>
            <person name="Blumenthal T."/>
            <person name="Brent M.R."/>
            <person name="Chen N."/>
            <person name="Chinwalla A."/>
            <person name="Clarke L."/>
            <person name="Clee C."/>
            <person name="Coghlan A."/>
            <person name="Coulson A."/>
            <person name="D'Eustachio P."/>
            <person name="Fitch D.H.A."/>
            <person name="Fulton L.A."/>
            <person name="Fulton R.E."/>
            <person name="Griffiths-Jones S."/>
            <person name="Harris T.W."/>
            <person name="Hillier L.W."/>
            <person name="Kamath R."/>
            <person name="Kuwabara P.E."/>
            <person name="Mardis E.R."/>
            <person name="Marra M.A."/>
            <person name="Miner T.L."/>
            <person name="Minx P."/>
            <person name="Mullikin J.C."/>
            <person name="Plumb R.W."/>
            <person name="Rogers J."/>
            <person name="Schein J.E."/>
            <person name="Sohrmann M."/>
            <person name="Spieth J."/>
            <person name="Stajich J.E."/>
            <person name="Wei C."/>
            <person name="Willey D."/>
            <person name="Wilson R.K."/>
            <person name="Durbin R.M."/>
            <person name="Waterston R.H."/>
        </authorList>
    </citation>
    <scope>NUCLEOTIDE SEQUENCE [LARGE SCALE GENOMIC DNA]</scope>
    <source>
        <strain evidence="6">AF16</strain>
    </source>
</reference>
<reference evidence="5 6" key="2">
    <citation type="submission" date="2007-09" db="EMBL/GenBank/DDBJ databases">
        <authorList>
            <consortium name="The C.briggsae Sequencing Consortium"/>
        </authorList>
    </citation>
    <scope>SEQUENCE REVISION</scope>
    <source>
        <strain evidence="6">AF16</strain>
    </source>
</reference>
<proteinExistence type="inferred from homology"/>
<name>OXDD2_CAEBR</name>